<gene>
    <name type="primary">Ap5b1</name>
    <name type="synonym">Gm962</name>
</gene>
<reference key="1">
    <citation type="journal article" date="2005" name="Science">
        <title>The transcriptional landscape of the mammalian genome.</title>
        <authorList>
            <person name="Carninci P."/>
            <person name="Kasukawa T."/>
            <person name="Katayama S."/>
            <person name="Gough J."/>
            <person name="Frith M.C."/>
            <person name="Maeda N."/>
            <person name="Oyama R."/>
            <person name="Ravasi T."/>
            <person name="Lenhard B."/>
            <person name="Wells C."/>
            <person name="Kodzius R."/>
            <person name="Shimokawa K."/>
            <person name="Bajic V.B."/>
            <person name="Brenner S.E."/>
            <person name="Batalov S."/>
            <person name="Forrest A.R."/>
            <person name="Zavolan M."/>
            <person name="Davis M.J."/>
            <person name="Wilming L.G."/>
            <person name="Aidinis V."/>
            <person name="Allen J.E."/>
            <person name="Ambesi-Impiombato A."/>
            <person name="Apweiler R."/>
            <person name="Aturaliya R.N."/>
            <person name="Bailey T.L."/>
            <person name="Bansal M."/>
            <person name="Baxter L."/>
            <person name="Beisel K.W."/>
            <person name="Bersano T."/>
            <person name="Bono H."/>
            <person name="Chalk A.M."/>
            <person name="Chiu K.P."/>
            <person name="Choudhary V."/>
            <person name="Christoffels A."/>
            <person name="Clutterbuck D.R."/>
            <person name="Crowe M.L."/>
            <person name="Dalla E."/>
            <person name="Dalrymple B.P."/>
            <person name="de Bono B."/>
            <person name="Della Gatta G."/>
            <person name="di Bernardo D."/>
            <person name="Down T."/>
            <person name="Engstrom P."/>
            <person name="Fagiolini M."/>
            <person name="Faulkner G."/>
            <person name="Fletcher C.F."/>
            <person name="Fukushima T."/>
            <person name="Furuno M."/>
            <person name="Futaki S."/>
            <person name="Gariboldi M."/>
            <person name="Georgii-Hemming P."/>
            <person name="Gingeras T.R."/>
            <person name="Gojobori T."/>
            <person name="Green R.E."/>
            <person name="Gustincich S."/>
            <person name="Harbers M."/>
            <person name="Hayashi Y."/>
            <person name="Hensch T.K."/>
            <person name="Hirokawa N."/>
            <person name="Hill D."/>
            <person name="Huminiecki L."/>
            <person name="Iacono M."/>
            <person name="Ikeo K."/>
            <person name="Iwama A."/>
            <person name="Ishikawa T."/>
            <person name="Jakt M."/>
            <person name="Kanapin A."/>
            <person name="Katoh M."/>
            <person name="Kawasawa Y."/>
            <person name="Kelso J."/>
            <person name="Kitamura H."/>
            <person name="Kitano H."/>
            <person name="Kollias G."/>
            <person name="Krishnan S.P."/>
            <person name="Kruger A."/>
            <person name="Kummerfeld S.K."/>
            <person name="Kurochkin I.V."/>
            <person name="Lareau L.F."/>
            <person name="Lazarevic D."/>
            <person name="Lipovich L."/>
            <person name="Liu J."/>
            <person name="Liuni S."/>
            <person name="McWilliam S."/>
            <person name="Madan Babu M."/>
            <person name="Madera M."/>
            <person name="Marchionni L."/>
            <person name="Matsuda H."/>
            <person name="Matsuzawa S."/>
            <person name="Miki H."/>
            <person name="Mignone F."/>
            <person name="Miyake S."/>
            <person name="Morris K."/>
            <person name="Mottagui-Tabar S."/>
            <person name="Mulder N."/>
            <person name="Nakano N."/>
            <person name="Nakauchi H."/>
            <person name="Ng P."/>
            <person name="Nilsson R."/>
            <person name="Nishiguchi S."/>
            <person name="Nishikawa S."/>
            <person name="Nori F."/>
            <person name="Ohara O."/>
            <person name="Okazaki Y."/>
            <person name="Orlando V."/>
            <person name="Pang K.C."/>
            <person name="Pavan W.J."/>
            <person name="Pavesi G."/>
            <person name="Pesole G."/>
            <person name="Petrovsky N."/>
            <person name="Piazza S."/>
            <person name="Reed J."/>
            <person name="Reid J.F."/>
            <person name="Ring B.Z."/>
            <person name="Ringwald M."/>
            <person name="Rost B."/>
            <person name="Ruan Y."/>
            <person name="Salzberg S.L."/>
            <person name="Sandelin A."/>
            <person name="Schneider C."/>
            <person name="Schoenbach C."/>
            <person name="Sekiguchi K."/>
            <person name="Semple C.A."/>
            <person name="Seno S."/>
            <person name="Sessa L."/>
            <person name="Sheng Y."/>
            <person name="Shibata Y."/>
            <person name="Shimada H."/>
            <person name="Shimada K."/>
            <person name="Silva D."/>
            <person name="Sinclair B."/>
            <person name="Sperling S."/>
            <person name="Stupka E."/>
            <person name="Sugiura K."/>
            <person name="Sultana R."/>
            <person name="Takenaka Y."/>
            <person name="Taki K."/>
            <person name="Tammoja K."/>
            <person name="Tan S.L."/>
            <person name="Tang S."/>
            <person name="Taylor M.S."/>
            <person name="Tegner J."/>
            <person name="Teichmann S.A."/>
            <person name="Ueda H.R."/>
            <person name="van Nimwegen E."/>
            <person name="Verardo R."/>
            <person name="Wei C.L."/>
            <person name="Yagi K."/>
            <person name="Yamanishi H."/>
            <person name="Zabarovsky E."/>
            <person name="Zhu S."/>
            <person name="Zimmer A."/>
            <person name="Hide W."/>
            <person name="Bult C."/>
            <person name="Grimmond S.M."/>
            <person name="Teasdale R.D."/>
            <person name="Liu E.T."/>
            <person name="Brusic V."/>
            <person name="Quackenbush J."/>
            <person name="Wahlestedt C."/>
            <person name="Mattick J.S."/>
            <person name="Hume D.A."/>
            <person name="Kai C."/>
            <person name="Sasaki D."/>
            <person name="Tomaru Y."/>
            <person name="Fukuda S."/>
            <person name="Kanamori-Katayama M."/>
            <person name="Suzuki M."/>
            <person name="Aoki J."/>
            <person name="Arakawa T."/>
            <person name="Iida J."/>
            <person name="Imamura K."/>
            <person name="Itoh M."/>
            <person name="Kato T."/>
            <person name="Kawaji H."/>
            <person name="Kawagashira N."/>
            <person name="Kawashima T."/>
            <person name="Kojima M."/>
            <person name="Kondo S."/>
            <person name="Konno H."/>
            <person name="Nakano K."/>
            <person name="Ninomiya N."/>
            <person name="Nishio T."/>
            <person name="Okada M."/>
            <person name="Plessy C."/>
            <person name="Shibata K."/>
            <person name="Shiraki T."/>
            <person name="Suzuki S."/>
            <person name="Tagami M."/>
            <person name="Waki K."/>
            <person name="Watahiki A."/>
            <person name="Okamura-Oho Y."/>
            <person name="Suzuki H."/>
            <person name="Kawai J."/>
            <person name="Hayashizaki Y."/>
        </authorList>
    </citation>
    <scope>NUCLEOTIDE SEQUENCE [LARGE SCALE MRNA]</scope>
    <source>
        <strain>C3H/HeJ</strain>
        <strain>NOD</strain>
        <tissue>Brain</tissue>
        <tissue>Spleen</tissue>
    </source>
</reference>
<reference key="2">
    <citation type="journal article" date="2004" name="Genome Res.">
        <title>The status, quality, and expansion of the NIH full-length cDNA project: the Mammalian Gene Collection (MGC).</title>
        <authorList>
            <consortium name="The MGC Project Team"/>
        </authorList>
    </citation>
    <scope>NUCLEOTIDE SEQUENCE [LARGE SCALE MRNA]</scope>
    <source>
        <tissue>Brain</tissue>
    </source>
</reference>
<reference key="3">
    <citation type="journal article" date="2010" name="Cell">
        <title>A tissue-specific atlas of mouse protein phosphorylation and expression.</title>
        <authorList>
            <person name="Huttlin E.L."/>
            <person name="Jedrychowski M.P."/>
            <person name="Elias J.E."/>
            <person name="Goswami T."/>
            <person name="Rad R."/>
            <person name="Beausoleil S.A."/>
            <person name="Villen J."/>
            <person name="Haas W."/>
            <person name="Sowa M.E."/>
            <person name="Gygi S.P."/>
        </authorList>
    </citation>
    <scope>IDENTIFICATION BY MASS SPECTROMETRY [LARGE SCALE ANALYSIS]</scope>
    <source>
        <tissue>Spleen</tissue>
        <tissue>Testis</tissue>
    </source>
</reference>
<proteinExistence type="evidence at protein level"/>
<protein>
    <recommendedName>
        <fullName>AP-5 complex subunit beta-1</fullName>
    </recommendedName>
    <alternativeName>
        <fullName>Adaptor-related protein complex 5 beta subunit</fullName>
        <shortName>Beta5</shortName>
    </alternativeName>
</protein>
<comment type="function">
    <text evidence="1">As part of AP-5, a probable fifth adaptor protein complex it may be involved in endosomal transport.</text>
</comment>
<comment type="subunit">
    <text evidence="1">Probably part of the adaptor protein complex 5 (AP-5), a tetramer composed of AP5B1, AP5M1, AP5S1 and AP5Z1. Interacts with ZFYVE26 and SPG11 (By similarity).</text>
</comment>
<name>AP5B1_MOUSE</name>
<organism>
    <name type="scientific">Mus musculus</name>
    <name type="common">Mouse</name>
    <dbReference type="NCBI Taxonomy" id="10090"/>
    <lineage>
        <taxon>Eukaryota</taxon>
        <taxon>Metazoa</taxon>
        <taxon>Chordata</taxon>
        <taxon>Craniata</taxon>
        <taxon>Vertebrata</taxon>
        <taxon>Euteleostomi</taxon>
        <taxon>Mammalia</taxon>
        <taxon>Eutheria</taxon>
        <taxon>Euarchontoglires</taxon>
        <taxon>Glires</taxon>
        <taxon>Rodentia</taxon>
        <taxon>Myomorpha</taxon>
        <taxon>Muroidea</taxon>
        <taxon>Muridae</taxon>
        <taxon>Murinae</taxon>
        <taxon>Mus</taxon>
        <taxon>Mus</taxon>
    </lineage>
</organism>
<sequence length="876" mass="94679">MGPLGREAWAQRLGAFRASPSAFLAGAEGEDLGRDLLSDLRSEKLSEQTKVSLLTLSLEYSDKLWPDAPAAEAAATSLLDTLVLLPTRPSALRRLLLLAATTALVSGDALGPTSGASCRLLPLLLGLASGRDLGRSFGTPSEQRHLQATACECLGELERCKPGLLAGALGMLRSLPGQTGPIQPVSLLLALVLHDTLVVQSRSGAGLQGLLVAEDFSTGSCPWDWTLAEEWDAHLKPQGPSWPTAGEEERGFPVLEPSPEDARELKAAVAQLLDTSYLLTPVAQAQLLWLLGWALRGLRGQPPVLFKPQLVRLLGTAQLTLLHSVLSLKAAFGEALFTAQDEALLLRRLTLGAQHPALPSPTHLFYLHCILSFPENCPLGPEGEEAAPLLLGPQLCRGLMPSLLHDPTVLLARLHLLCLLCADDEEEEKDQTQGPQWFLQEVLAGLQQRAALDGGPRALATLCFQASYLVTNCLTRHSTVQTFLIRGLAQLYRARPSLAPHFVDLLDQVSPELREPLREVLLQEAVARPGESEALCWHLQMLAKVAEGATQSTTLSFLQAAAVHCTDWGLHQALLRVCRALLRTGGGDGLANLLQELARQLENADGRDHARLYYVLLSHLSSSKLGMALGPSLAAPALASSLMAENQGFSSALMVQETSAPIQLSVGPQQAKGPLPVLCLQVQALDAPVYSLELRFRVEGQLYEPLEAVHIPCLRPGQPAHPLYLLLQPRCPAPARLHVRALYSTSAGLTCHARLPPLSVNFADLFLPFPRLPKGSELRFFDELWNSCLPKGVESRVWCPLGQQGLEALVSQYLEPFVVLAQPPTTYLIAIRLPPASMLLLRLEKAQVDGVPVALRTDDWAVLPLVGDYLRGLAAH</sequence>
<dbReference type="EMBL" id="AK144121">
    <property type="protein sequence ID" value="BAE25712.1"/>
    <property type="molecule type" value="mRNA"/>
</dbReference>
<dbReference type="EMBL" id="AK171710">
    <property type="protein sequence ID" value="BAE42624.1"/>
    <property type="molecule type" value="mRNA"/>
</dbReference>
<dbReference type="EMBL" id="BC147482">
    <property type="protein sequence ID" value="AAI47483.1"/>
    <property type="molecule type" value="mRNA"/>
</dbReference>
<dbReference type="CCDS" id="CCDS29470.1"/>
<dbReference type="RefSeq" id="NP_001028620.1">
    <property type="nucleotide sequence ID" value="NM_001033448.3"/>
</dbReference>
<dbReference type="RefSeq" id="NP_001348975.1">
    <property type="nucleotide sequence ID" value="NM_001362046.1"/>
</dbReference>
<dbReference type="RefSeq" id="XP_006531846.1">
    <property type="nucleotide sequence ID" value="XM_006531783.3"/>
</dbReference>
<dbReference type="RefSeq" id="XP_006531847.1">
    <property type="nucleotide sequence ID" value="XM_006531784.2"/>
</dbReference>
<dbReference type="ComplexPortal" id="CPX-5182">
    <property type="entry name" value="AP-5 Adaptor complex"/>
</dbReference>
<dbReference type="FunCoup" id="Q3TAP4">
    <property type="interactions" value="167"/>
</dbReference>
<dbReference type="STRING" id="10090.ENSMUSP00000094042"/>
<dbReference type="GlyGen" id="Q3TAP4">
    <property type="glycosylation" value="1 site"/>
</dbReference>
<dbReference type="PhosphoSitePlus" id="Q3TAP4"/>
<dbReference type="PaxDb" id="10090-ENSMUSP00000094042"/>
<dbReference type="PeptideAtlas" id="Q3TAP4"/>
<dbReference type="ProteomicsDB" id="296361"/>
<dbReference type="Pumba" id="Q3TAP4"/>
<dbReference type="Antibodypedia" id="70575">
    <property type="antibodies" value="10 antibodies from 6 providers"/>
</dbReference>
<dbReference type="DNASU" id="381201"/>
<dbReference type="Ensembl" id="ENSMUST00000096318.4">
    <property type="protein sequence ID" value="ENSMUSP00000094042.4"/>
    <property type="gene ID" value="ENSMUSG00000049562.7"/>
</dbReference>
<dbReference type="Ensembl" id="ENSMUST00000235575.2">
    <property type="protein sequence ID" value="ENSMUSP00000157737.2"/>
    <property type="gene ID" value="ENSMUSG00000049562.7"/>
</dbReference>
<dbReference type="GeneID" id="381201"/>
<dbReference type="KEGG" id="mmu:381201"/>
<dbReference type="UCSC" id="uc008gdv.1">
    <property type="organism name" value="mouse"/>
</dbReference>
<dbReference type="AGR" id="MGI:2685808"/>
<dbReference type="CTD" id="91056"/>
<dbReference type="MGI" id="MGI:2685808">
    <property type="gene designation" value="Ap5b1"/>
</dbReference>
<dbReference type="VEuPathDB" id="HostDB:ENSMUSG00000049562"/>
<dbReference type="eggNOG" id="ENOG502QVTX">
    <property type="taxonomic scope" value="Eukaryota"/>
</dbReference>
<dbReference type="GeneTree" id="ENSGT00530000064721"/>
<dbReference type="HOGENOM" id="CLU_014176_0_0_1"/>
<dbReference type="InParanoid" id="Q3TAP4"/>
<dbReference type="OMA" id="SHHLEPF"/>
<dbReference type="OrthoDB" id="646197at2759"/>
<dbReference type="PhylomeDB" id="Q3TAP4"/>
<dbReference type="TreeFam" id="TF332158"/>
<dbReference type="BioGRID-ORCS" id="381201">
    <property type="hits" value="3 hits in 77 CRISPR screens"/>
</dbReference>
<dbReference type="PRO" id="PR:Q3TAP4"/>
<dbReference type="Proteomes" id="UP000000589">
    <property type="component" value="Chromosome 19"/>
</dbReference>
<dbReference type="RNAct" id="Q3TAP4">
    <property type="molecule type" value="protein"/>
</dbReference>
<dbReference type="Bgee" id="ENSMUSG00000049562">
    <property type="expression patterns" value="Expressed in granulocyte and 124 other cell types or tissues"/>
</dbReference>
<dbReference type="ExpressionAtlas" id="Q3TAP4">
    <property type="expression patterns" value="baseline and differential"/>
</dbReference>
<dbReference type="GO" id="GO:0044599">
    <property type="term" value="C:AP-5 adaptor complex"/>
    <property type="evidence" value="ECO:0000303"/>
    <property type="project" value="ComplexPortal"/>
</dbReference>
<dbReference type="GO" id="GO:0030119">
    <property type="term" value="C:AP-type membrane coat adaptor complex"/>
    <property type="evidence" value="ECO:0000250"/>
    <property type="project" value="UniProtKB"/>
</dbReference>
<dbReference type="GO" id="GO:0005770">
    <property type="term" value="C:late endosome"/>
    <property type="evidence" value="ECO:0000303"/>
    <property type="project" value="ComplexPortal"/>
</dbReference>
<dbReference type="GO" id="GO:0016197">
    <property type="term" value="P:endosomal transport"/>
    <property type="evidence" value="ECO:0000250"/>
    <property type="project" value="UniProtKB"/>
</dbReference>
<dbReference type="GO" id="GO:0015031">
    <property type="term" value="P:protein transport"/>
    <property type="evidence" value="ECO:0007669"/>
    <property type="project" value="UniProtKB-KW"/>
</dbReference>
<dbReference type="GO" id="GO:0016192">
    <property type="term" value="P:vesicle-mediated transport"/>
    <property type="evidence" value="ECO:0000303"/>
    <property type="project" value="ComplexPortal"/>
</dbReference>
<dbReference type="InterPro" id="IPR038741">
    <property type="entry name" value="AP5B1"/>
</dbReference>
<dbReference type="InterPro" id="IPR048980">
    <property type="entry name" value="AP5B1_barrel"/>
</dbReference>
<dbReference type="InterPro" id="IPR048981">
    <property type="entry name" value="AP5B1_C"/>
</dbReference>
<dbReference type="InterPro" id="IPR048979">
    <property type="entry name" value="AP5B1_middle"/>
</dbReference>
<dbReference type="InterPro" id="IPR048978">
    <property type="entry name" value="AP5B1_N"/>
</dbReference>
<dbReference type="PANTHER" id="PTHR34033">
    <property type="entry name" value="AP-5 COMPLEX SUBUNIT BETA-1"/>
    <property type="match status" value="1"/>
</dbReference>
<dbReference type="PANTHER" id="PTHR34033:SF1">
    <property type="entry name" value="AP-5 COMPLEX SUBUNIT BETA-1"/>
    <property type="match status" value="1"/>
</dbReference>
<dbReference type="Pfam" id="PF21589">
    <property type="entry name" value="AP5B1_barrel"/>
    <property type="match status" value="1"/>
</dbReference>
<dbReference type="Pfam" id="PF21590">
    <property type="entry name" value="AP5B1_C"/>
    <property type="match status" value="1"/>
</dbReference>
<dbReference type="Pfam" id="PF21588">
    <property type="entry name" value="AP5B1_middle"/>
    <property type="match status" value="1"/>
</dbReference>
<dbReference type="Pfam" id="PF21587">
    <property type="entry name" value="AP5B1_N"/>
    <property type="match status" value="1"/>
</dbReference>
<keyword id="KW-0653">Protein transport</keyword>
<keyword id="KW-1185">Reference proteome</keyword>
<keyword id="KW-0813">Transport</keyword>
<feature type="chain" id="PRO_0000405405" description="AP-5 complex subunit beta-1">
    <location>
        <begin position="1"/>
        <end position="876"/>
    </location>
</feature>
<evidence type="ECO:0000250" key="1"/>
<accession>Q3TAP4</accession>